<comment type="function">
    <text evidence="1">This protein binds to 23S rRNA in the presence of protein L20.</text>
</comment>
<comment type="subunit">
    <text evidence="1">Part of the 50S ribosomal subunit. Contacts protein L20.</text>
</comment>
<comment type="similarity">
    <text evidence="1">Belongs to the bacterial ribosomal protein bL21 family.</text>
</comment>
<protein>
    <recommendedName>
        <fullName evidence="1">Large ribosomal subunit protein bL21</fullName>
    </recommendedName>
    <alternativeName>
        <fullName evidence="2">50S ribosomal protein L21</fullName>
    </alternativeName>
</protein>
<reference key="1">
    <citation type="journal article" date="2008" name="Mol. Biol. Evol.">
        <title>Genome evolution of Wolbachia strain wPip from the Culex pipiens group.</title>
        <authorList>
            <person name="Klasson L."/>
            <person name="Walker T."/>
            <person name="Sebaihia M."/>
            <person name="Sanders M.J."/>
            <person name="Quail M.A."/>
            <person name="Lord A."/>
            <person name="Sanders S."/>
            <person name="Earl J."/>
            <person name="O'Neill S.L."/>
            <person name="Thomson N."/>
            <person name="Sinkins S.P."/>
            <person name="Parkhill J."/>
        </authorList>
    </citation>
    <scope>NUCLEOTIDE SEQUENCE [LARGE SCALE GENOMIC DNA]</scope>
    <source>
        <strain>wPip</strain>
    </source>
</reference>
<dbReference type="EMBL" id="AM999887">
    <property type="protein sequence ID" value="CAQ55248.1"/>
    <property type="molecule type" value="Genomic_DNA"/>
</dbReference>
<dbReference type="RefSeq" id="WP_007302510.1">
    <property type="nucleotide sequence ID" value="NC_010981.1"/>
</dbReference>
<dbReference type="SMR" id="B3CN01"/>
<dbReference type="KEGG" id="wpi:WP1140"/>
<dbReference type="eggNOG" id="COG0261">
    <property type="taxonomic scope" value="Bacteria"/>
</dbReference>
<dbReference type="HOGENOM" id="CLU_061463_3_2_5"/>
<dbReference type="Proteomes" id="UP000008814">
    <property type="component" value="Chromosome"/>
</dbReference>
<dbReference type="GO" id="GO:0005737">
    <property type="term" value="C:cytoplasm"/>
    <property type="evidence" value="ECO:0007669"/>
    <property type="project" value="UniProtKB-ARBA"/>
</dbReference>
<dbReference type="GO" id="GO:1990904">
    <property type="term" value="C:ribonucleoprotein complex"/>
    <property type="evidence" value="ECO:0007669"/>
    <property type="project" value="UniProtKB-KW"/>
</dbReference>
<dbReference type="GO" id="GO:0005840">
    <property type="term" value="C:ribosome"/>
    <property type="evidence" value="ECO:0007669"/>
    <property type="project" value="UniProtKB-KW"/>
</dbReference>
<dbReference type="GO" id="GO:0019843">
    <property type="term" value="F:rRNA binding"/>
    <property type="evidence" value="ECO:0007669"/>
    <property type="project" value="UniProtKB-UniRule"/>
</dbReference>
<dbReference type="GO" id="GO:0003735">
    <property type="term" value="F:structural constituent of ribosome"/>
    <property type="evidence" value="ECO:0007669"/>
    <property type="project" value="InterPro"/>
</dbReference>
<dbReference type="GO" id="GO:0006412">
    <property type="term" value="P:translation"/>
    <property type="evidence" value="ECO:0007669"/>
    <property type="project" value="UniProtKB-UniRule"/>
</dbReference>
<dbReference type="HAMAP" id="MF_01363">
    <property type="entry name" value="Ribosomal_bL21"/>
    <property type="match status" value="1"/>
</dbReference>
<dbReference type="InterPro" id="IPR028909">
    <property type="entry name" value="bL21-like"/>
</dbReference>
<dbReference type="InterPro" id="IPR036164">
    <property type="entry name" value="bL21-like_sf"/>
</dbReference>
<dbReference type="InterPro" id="IPR001787">
    <property type="entry name" value="Ribosomal_bL21"/>
</dbReference>
<dbReference type="InterPro" id="IPR018258">
    <property type="entry name" value="Ribosomal_bL21_CS"/>
</dbReference>
<dbReference type="NCBIfam" id="TIGR00061">
    <property type="entry name" value="L21"/>
    <property type="match status" value="1"/>
</dbReference>
<dbReference type="PANTHER" id="PTHR21349">
    <property type="entry name" value="50S RIBOSOMAL PROTEIN L21"/>
    <property type="match status" value="1"/>
</dbReference>
<dbReference type="PANTHER" id="PTHR21349:SF0">
    <property type="entry name" value="LARGE RIBOSOMAL SUBUNIT PROTEIN BL21M"/>
    <property type="match status" value="1"/>
</dbReference>
<dbReference type="Pfam" id="PF00829">
    <property type="entry name" value="Ribosomal_L21p"/>
    <property type="match status" value="1"/>
</dbReference>
<dbReference type="SUPFAM" id="SSF141091">
    <property type="entry name" value="L21p-like"/>
    <property type="match status" value="1"/>
</dbReference>
<dbReference type="PROSITE" id="PS01169">
    <property type="entry name" value="RIBOSOMAL_L21"/>
    <property type="match status" value="1"/>
</dbReference>
<proteinExistence type="inferred from homology"/>
<feature type="chain" id="PRO_1000143870" description="Large ribosomal subunit protein bL21">
    <location>
        <begin position="1"/>
        <end position="100"/>
    </location>
</feature>
<name>RL21_WOLPP</name>
<organism>
    <name type="scientific">Wolbachia pipientis subsp. Culex pipiens (strain wPip)</name>
    <dbReference type="NCBI Taxonomy" id="570417"/>
    <lineage>
        <taxon>Bacteria</taxon>
        <taxon>Pseudomonadati</taxon>
        <taxon>Pseudomonadota</taxon>
        <taxon>Alphaproteobacteria</taxon>
        <taxon>Rickettsiales</taxon>
        <taxon>Anaplasmataceae</taxon>
        <taxon>Wolbachieae</taxon>
        <taxon>Wolbachia</taxon>
    </lineage>
</organism>
<gene>
    <name evidence="1" type="primary">rplU</name>
    <name type="ordered locus">WP1140</name>
</gene>
<evidence type="ECO:0000255" key="1">
    <source>
        <dbReference type="HAMAP-Rule" id="MF_01363"/>
    </source>
</evidence>
<evidence type="ECO:0000305" key="2"/>
<keyword id="KW-0687">Ribonucleoprotein</keyword>
<keyword id="KW-0689">Ribosomal protein</keyword>
<keyword id="KW-0694">RNA-binding</keyword>
<keyword id="KW-0699">rRNA-binding</keyword>
<sequence length="100" mass="11607">MFAVIETGGKQYLVKKGSIIKVERLQAEEKEEVEINKVICVSNNGLSCSSNAVVKAEVLEQCRDKKIIIFKKKRRKNYRRKNGHRQYITVLRINEISLQK</sequence>
<accession>B3CN01</accession>